<evidence type="ECO:0000255" key="1">
    <source>
        <dbReference type="HAMAP-Rule" id="MF_00686"/>
    </source>
</evidence>
<proteinExistence type="inferred from homology"/>
<name>FETP_VIBA3</name>
<comment type="function">
    <text evidence="1">Could be a mediator in iron transactions between iron acquisition and iron-requiring processes, such as synthesis and/or repair of Fe-S clusters in biosynthetic enzymes.</text>
</comment>
<comment type="similarity">
    <text evidence="1">Belongs to the Fe(2+)-trafficking protein family.</text>
</comment>
<keyword id="KW-0408">Iron</keyword>
<protein>
    <recommendedName>
        <fullName evidence="1">Probable Fe(2+)-trafficking protein</fullName>
    </recommendedName>
</protein>
<sequence length="90" mass="10485">MSRTVFCARLQKDAEGLDFQLYPGDLGKRIFDNVSKEAWGQWQSKQTMLINEKKLNMMDPEHRKLLETEMVNFLFEGKDVVIDGYTPPSE</sequence>
<reference key="1">
    <citation type="submission" date="2009-02" db="EMBL/GenBank/DDBJ databases">
        <title>Vibrio splendidus str. LGP32 complete genome.</title>
        <authorList>
            <person name="Mazel D."/>
            <person name="Le Roux F."/>
        </authorList>
    </citation>
    <scope>NUCLEOTIDE SEQUENCE [LARGE SCALE GENOMIC DNA]</scope>
    <source>
        <strain>LGP32</strain>
    </source>
</reference>
<accession>B7VKR6</accession>
<dbReference type="EMBL" id="FM954972">
    <property type="protein sequence ID" value="CAV19960.1"/>
    <property type="molecule type" value="Genomic_DNA"/>
</dbReference>
<dbReference type="SMR" id="B7VKR6"/>
<dbReference type="STRING" id="575788.VS_2693"/>
<dbReference type="KEGG" id="vsp:VS_2693"/>
<dbReference type="eggNOG" id="COG2924">
    <property type="taxonomic scope" value="Bacteria"/>
</dbReference>
<dbReference type="HOGENOM" id="CLU_170994_0_0_6"/>
<dbReference type="Proteomes" id="UP000009100">
    <property type="component" value="Chromosome 1"/>
</dbReference>
<dbReference type="GO" id="GO:0005829">
    <property type="term" value="C:cytosol"/>
    <property type="evidence" value="ECO:0007669"/>
    <property type="project" value="TreeGrafter"/>
</dbReference>
<dbReference type="GO" id="GO:0005506">
    <property type="term" value="F:iron ion binding"/>
    <property type="evidence" value="ECO:0007669"/>
    <property type="project" value="UniProtKB-UniRule"/>
</dbReference>
<dbReference type="GO" id="GO:0034599">
    <property type="term" value="P:cellular response to oxidative stress"/>
    <property type="evidence" value="ECO:0007669"/>
    <property type="project" value="TreeGrafter"/>
</dbReference>
<dbReference type="FunFam" id="1.10.3880.10:FF:000001">
    <property type="entry name" value="Probable Fe(2+)-trafficking protein"/>
    <property type="match status" value="1"/>
</dbReference>
<dbReference type="Gene3D" id="1.10.3880.10">
    <property type="entry name" value="Fe(II) trafficking protein YggX"/>
    <property type="match status" value="1"/>
</dbReference>
<dbReference type="HAMAP" id="MF_00686">
    <property type="entry name" value="Fe_traffic_YggX"/>
    <property type="match status" value="1"/>
</dbReference>
<dbReference type="InterPro" id="IPR007457">
    <property type="entry name" value="Fe_traffick_prot_YggX"/>
</dbReference>
<dbReference type="InterPro" id="IPR036766">
    <property type="entry name" value="Fe_traffick_prot_YggX_sf"/>
</dbReference>
<dbReference type="NCBIfam" id="NF003817">
    <property type="entry name" value="PRK05408.1"/>
    <property type="match status" value="1"/>
</dbReference>
<dbReference type="PANTHER" id="PTHR36965">
    <property type="entry name" value="FE(2+)-TRAFFICKING PROTEIN-RELATED"/>
    <property type="match status" value="1"/>
</dbReference>
<dbReference type="PANTHER" id="PTHR36965:SF1">
    <property type="entry name" value="FE(2+)-TRAFFICKING PROTEIN-RELATED"/>
    <property type="match status" value="1"/>
</dbReference>
<dbReference type="Pfam" id="PF04362">
    <property type="entry name" value="Iron_traffic"/>
    <property type="match status" value="1"/>
</dbReference>
<dbReference type="PIRSF" id="PIRSF029827">
    <property type="entry name" value="Fe_traffic_YggX"/>
    <property type="match status" value="1"/>
</dbReference>
<dbReference type="SUPFAM" id="SSF111148">
    <property type="entry name" value="YggX-like"/>
    <property type="match status" value="1"/>
</dbReference>
<feature type="chain" id="PRO_1000147773" description="Probable Fe(2+)-trafficking protein">
    <location>
        <begin position="1"/>
        <end position="90"/>
    </location>
</feature>
<gene>
    <name type="ordered locus">VS_2693</name>
</gene>
<organism>
    <name type="scientific">Vibrio atlanticus (strain LGP32)</name>
    <name type="common">Vibrio splendidus (strain Mel32)</name>
    <dbReference type="NCBI Taxonomy" id="575788"/>
    <lineage>
        <taxon>Bacteria</taxon>
        <taxon>Pseudomonadati</taxon>
        <taxon>Pseudomonadota</taxon>
        <taxon>Gammaproteobacteria</taxon>
        <taxon>Vibrionales</taxon>
        <taxon>Vibrionaceae</taxon>
        <taxon>Vibrio</taxon>
    </lineage>
</organism>